<comment type="function">
    <text evidence="1">Catalyzes oxygen-dependent 5-hydroxyuridine (ho5U) modification at position 34 in tRNAs.</text>
</comment>
<comment type="catalytic activity">
    <reaction evidence="1">
        <text>uridine(34) in tRNA + AH2 + O2 = 5-hydroxyuridine(34) in tRNA + A + H2O</text>
        <dbReference type="Rhea" id="RHEA:64224"/>
        <dbReference type="Rhea" id="RHEA-COMP:11727"/>
        <dbReference type="Rhea" id="RHEA-COMP:13381"/>
        <dbReference type="ChEBI" id="CHEBI:13193"/>
        <dbReference type="ChEBI" id="CHEBI:15377"/>
        <dbReference type="ChEBI" id="CHEBI:15379"/>
        <dbReference type="ChEBI" id="CHEBI:17499"/>
        <dbReference type="ChEBI" id="CHEBI:65315"/>
        <dbReference type="ChEBI" id="CHEBI:136877"/>
    </reaction>
</comment>
<comment type="similarity">
    <text evidence="1">Belongs to the TrhO family.</text>
</comment>
<proteinExistence type="inferred from homology"/>
<reference key="1">
    <citation type="journal article" date="2005" name="Nat. Biotechnol.">
        <title>Complete genome sequence of the plant commensal Pseudomonas fluorescens Pf-5.</title>
        <authorList>
            <person name="Paulsen I.T."/>
            <person name="Press C.M."/>
            <person name="Ravel J."/>
            <person name="Kobayashi D.Y."/>
            <person name="Myers G.S.A."/>
            <person name="Mavrodi D.V."/>
            <person name="DeBoy R.T."/>
            <person name="Seshadri R."/>
            <person name="Ren Q."/>
            <person name="Madupu R."/>
            <person name="Dodson R.J."/>
            <person name="Durkin A.S."/>
            <person name="Brinkac L.M."/>
            <person name="Daugherty S.C."/>
            <person name="Sullivan S.A."/>
            <person name="Rosovitz M.J."/>
            <person name="Gwinn M.L."/>
            <person name="Zhou L."/>
            <person name="Schneider D.J."/>
            <person name="Cartinhour S.W."/>
            <person name="Nelson W.C."/>
            <person name="Weidman J."/>
            <person name="Watkins K."/>
            <person name="Tran K."/>
            <person name="Khouri H."/>
            <person name="Pierson E.A."/>
            <person name="Pierson L.S. III"/>
            <person name="Thomashow L.S."/>
            <person name="Loper J.E."/>
        </authorList>
    </citation>
    <scope>NUCLEOTIDE SEQUENCE [LARGE SCALE GENOMIC DNA]</scope>
    <source>
        <strain>ATCC BAA-477 / NRRL B-23932 / Pf-5</strain>
    </source>
</reference>
<dbReference type="EC" id="1.14.-.-" evidence="1"/>
<dbReference type="EMBL" id="CP000076">
    <property type="protein sequence ID" value="AAY93580.1"/>
    <property type="molecule type" value="Genomic_DNA"/>
</dbReference>
<dbReference type="RefSeq" id="WP_011062595.1">
    <property type="nucleotide sequence ID" value="NC_004129.6"/>
</dbReference>
<dbReference type="SMR" id="Q4K8L6"/>
<dbReference type="STRING" id="220664.PFL_4325"/>
<dbReference type="KEGG" id="pfl:PFL_4325"/>
<dbReference type="PATRIC" id="fig|220664.5.peg.4430"/>
<dbReference type="eggNOG" id="COG1054">
    <property type="taxonomic scope" value="Bacteria"/>
</dbReference>
<dbReference type="HOGENOM" id="CLU_038878_0_0_6"/>
<dbReference type="Proteomes" id="UP000008540">
    <property type="component" value="Chromosome"/>
</dbReference>
<dbReference type="GO" id="GO:0016705">
    <property type="term" value="F:oxidoreductase activity, acting on paired donors, with incorporation or reduction of molecular oxygen"/>
    <property type="evidence" value="ECO:0007669"/>
    <property type="project" value="UniProtKB-UniRule"/>
</dbReference>
<dbReference type="GO" id="GO:0006400">
    <property type="term" value="P:tRNA modification"/>
    <property type="evidence" value="ECO:0007669"/>
    <property type="project" value="UniProtKB-UniRule"/>
</dbReference>
<dbReference type="CDD" id="cd01518">
    <property type="entry name" value="RHOD_YceA"/>
    <property type="match status" value="1"/>
</dbReference>
<dbReference type="Gene3D" id="3.30.70.100">
    <property type="match status" value="1"/>
</dbReference>
<dbReference type="Gene3D" id="3.40.250.10">
    <property type="entry name" value="Rhodanese-like domain"/>
    <property type="match status" value="1"/>
</dbReference>
<dbReference type="HAMAP" id="MF_00469">
    <property type="entry name" value="TrhO"/>
    <property type="match status" value="1"/>
</dbReference>
<dbReference type="InterPro" id="IPR001763">
    <property type="entry name" value="Rhodanese-like_dom"/>
</dbReference>
<dbReference type="InterPro" id="IPR036873">
    <property type="entry name" value="Rhodanese-like_dom_sf"/>
</dbReference>
<dbReference type="InterPro" id="IPR020936">
    <property type="entry name" value="TrhO"/>
</dbReference>
<dbReference type="InterPro" id="IPR040503">
    <property type="entry name" value="TRHO_N"/>
</dbReference>
<dbReference type="NCBIfam" id="NF001136">
    <property type="entry name" value="PRK00142.1-4"/>
    <property type="match status" value="1"/>
</dbReference>
<dbReference type="PANTHER" id="PTHR43268:SF3">
    <property type="entry name" value="RHODANESE-LIKE DOMAIN-CONTAINING PROTEIN 7-RELATED"/>
    <property type="match status" value="1"/>
</dbReference>
<dbReference type="PANTHER" id="PTHR43268">
    <property type="entry name" value="THIOSULFATE SULFURTRANSFERASE/RHODANESE-LIKE DOMAIN-CONTAINING PROTEIN 2"/>
    <property type="match status" value="1"/>
</dbReference>
<dbReference type="Pfam" id="PF00581">
    <property type="entry name" value="Rhodanese"/>
    <property type="match status" value="1"/>
</dbReference>
<dbReference type="Pfam" id="PF17773">
    <property type="entry name" value="UPF0176_N"/>
    <property type="match status" value="1"/>
</dbReference>
<dbReference type="SMART" id="SM00450">
    <property type="entry name" value="RHOD"/>
    <property type="match status" value="1"/>
</dbReference>
<dbReference type="SUPFAM" id="SSF52821">
    <property type="entry name" value="Rhodanese/Cell cycle control phosphatase"/>
    <property type="match status" value="1"/>
</dbReference>
<dbReference type="PROSITE" id="PS50206">
    <property type="entry name" value="RHODANESE_3"/>
    <property type="match status" value="1"/>
</dbReference>
<protein>
    <recommendedName>
        <fullName evidence="1">tRNA uridine(34) hydroxylase</fullName>
        <ecNumber evidence="1">1.14.-.-</ecNumber>
    </recommendedName>
    <alternativeName>
        <fullName evidence="1">tRNA hydroxylation protein O</fullName>
    </alternativeName>
</protein>
<sequence length="313" mass="35443">MAQPIVVAALYKFVTLEDYVNLREPLLQAMLDNGIKGTLLIAEEGINGTVSGSREGIDGLLAWLKNDPRMVDIDHKESYCDEQPFYRTKVKLKKEIVTLGVPGVDPNKKVGTYVEPQDWNALISDPEVLLIDTRNDYEVSIGTFEGAIDPKTTSFREFPDYIKAHFDPSKHKKVAMFCTGGIRCEKASSYMLSEGFDEVFHLKGGILKYLEEVPQQESKWQGDCFVFDNRVTVRHDLSEGDYDQCHACRTPVSVEDRASEHYVPGISCPHCWDKLSEKTRRSAIDRQKQIELAKARNMPHPIGYNYKQSSSEA</sequence>
<evidence type="ECO:0000255" key="1">
    <source>
        <dbReference type="HAMAP-Rule" id="MF_00469"/>
    </source>
</evidence>
<organism>
    <name type="scientific">Pseudomonas fluorescens (strain ATCC BAA-477 / NRRL B-23932 / Pf-5)</name>
    <dbReference type="NCBI Taxonomy" id="220664"/>
    <lineage>
        <taxon>Bacteria</taxon>
        <taxon>Pseudomonadati</taxon>
        <taxon>Pseudomonadota</taxon>
        <taxon>Gammaproteobacteria</taxon>
        <taxon>Pseudomonadales</taxon>
        <taxon>Pseudomonadaceae</taxon>
        <taxon>Pseudomonas</taxon>
    </lineage>
</organism>
<feature type="chain" id="PRO_0000242931" description="tRNA uridine(34) hydroxylase">
    <location>
        <begin position="1"/>
        <end position="313"/>
    </location>
</feature>
<feature type="domain" description="Rhodanese" evidence="1">
    <location>
        <begin position="124"/>
        <end position="218"/>
    </location>
</feature>
<feature type="active site" description="Cysteine persulfide intermediate" evidence="1">
    <location>
        <position position="178"/>
    </location>
</feature>
<keyword id="KW-0560">Oxidoreductase</keyword>
<keyword id="KW-0819">tRNA processing</keyword>
<accession>Q4K8L6</accession>
<gene>
    <name evidence="1" type="primary">trhO</name>
    <name type="ordered locus">PFL_4325</name>
</gene>
<name>TRHO_PSEF5</name>